<comment type="function">
    <text evidence="4">Nuclear receptor transcription factor that binds to DNA enhancer elements to promote the transcription of genes required to maintain micronutrient homeostasis. Direct binding to its ligand zinc allows for nuclear accumulation and activation, which thereby induces the transcription of genes required to promote the storage and detoxification of excess dietary zinc. This in turn, allows for internal zinc levels to be detected and regulated.</text>
</comment>
<comment type="subcellular location">
    <subcellularLocation>
        <location evidence="1 4">Nucleus</location>
    </subcellularLocation>
    <subcellularLocation>
        <location evidence="4">Cytoplasm</location>
    </subcellularLocation>
    <text evidence="4">Localizes to the cytoplasm in the absence of excess zinc, but accumulates in the nucleus when zinc is in excess.</text>
</comment>
<comment type="tissue specificity">
    <text evidence="4">Weakly expressed in intestinal cells in the absence of zinc supplementation. Upon zinc supplementation, accumulates in alimentary tract cells, and it is mainly expressed in the intestine.</text>
</comment>
<comment type="induction">
    <text evidence="4">Induced by high levels of zinc.</text>
</comment>
<comment type="disruption phenotype">
    <text evidence="4">In the presence of excess dietary zinc, reduced transcription of genes such as cdf-2, ttm-1b and mtl-1, which are required for zinc homeostasis, and retarded growth as compared to wild-type.</text>
</comment>
<comment type="similarity">
    <text evidence="3">Belongs to the nuclear hormone receptor family.</text>
</comment>
<evidence type="ECO:0000255" key="1">
    <source>
        <dbReference type="PROSITE-ProRule" id="PRU00407"/>
    </source>
</evidence>
<evidence type="ECO:0000255" key="2">
    <source>
        <dbReference type="PROSITE-ProRule" id="PRU01189"/>
    </source>
</evidence>
<evidence type="ECO:0000255" key="3">
    <source>
        <dbReference type="RuleBase" id="RU004334"/>
    </source>
</evidence>
<evidence type="ECO:0000269" key="4">
    <source>
    </source>
</evidence>
<evidence type="ECO:0000303" key="5">
    <source>
    </source>
</evidence>
<evidence type="ECO:0000305" key="6"/>
<evidence type="ECO:0000305" key="7">
    <source>
    </source>
</evidence>
<evidence type="ECO:0000312" key="8">
    <source>
        <dbReference type="Proteomes" id="UP000001940"/>
    </source>
</evidence>
<evidence type="ECO:0000312" key="9">
    <source>
        <dbReference type="WormBase" id="ZK455.6"/>
    </source>
</evidence>
<protein>
    <recommendedName>
        <fullName evidence="5">High zinc activated nuclear receptor protein</fullName>
    </recommendedName>
    <alternativeName>
        <fullName evidence="7">Nuclear hormone receptor family member nhr-33</fullName>
    </alternativeName>
</protein>
<keyword id="KW-0963">Cytoplasm</keyword>
<keyword id="KW-0238">DNA-binding</keyword>
<keyword id="KW-0479">Metal-binding</keyword>
<keyword id="KW-0539">Nucleus</keyword>
<keyword id="KW-0675">Receptor</keyword>
<keyword id="KW-1185">Reference proteome</keyword>
<keyword id="KW-0804">Transcription</keyword>
<keyword id="KW-0805">Transcription regulation</keyword>
<keyword id="KW-0862">Zinc</keyword>
<keyword id="KW-0863">Zinc-finger</keyword>
<sequence length="413" mass="46736">MQKVMNDPEDLGNCKICLQRADGIHFAVSSCRACAAFFRRTVILKLNYTCKEKGNCTVEKSLRNLCRSCRYTRCINEGMKIELVQLQRDSIGRKKSGASISIDPLFTPNVASSLSAIFKNEKEDVLSTSCTILSQMTSGYAMFLNIRRSTNTLVQSSVITPTFKMPKIELHASRFDSAKQVCKAEAHLVTDIVNSYFSPFNSLKFEDKVALFKNFFCYFSHTDRAYQSFKQFESDNLNDKILMPDGGFIKRTELGRFYENAEGVHTSAEDAAKIFQPALNYILDVIVDYMRRIHIIETEYLALLGFCLWDDAVPGLSKEAKSLAVQTQSKLLAELQNFYSSQNKDAVEITQRVGVLLLLVPKLTKCVIMLRENSVLAELFNYYEADVCCKNFKEDASVDLDCTSQCIVHTKND</sequence>
<gene>
    <name evidence="5 9" type="primary">hizr-1</name>
    <name evidence="9" type="synonym">nhr-33</name>
    <name evidence="9" type="ORF">ZK455.6</name>
</gene>
<dbReference type="EMBL" id="BX284606">
    <property type="protein sequence ID" value="CAA91494.3"/>
    <property type="molecule type" value="Genomic_DNA"/>
</dbReference>
<dbReference type="RefSeq" id="NP_509893.3">
    <property type="nucleotide sequence ID" value="NM_077492.7"/>
</dbReference>
<dbReference type="SMR" id="G5ED47"/>
<dbReference type="FunCoup" id="G5ED47">
    <property type="interactions" value="408"/>
</dbReference>
<dbReference type="STRING" id="6239.ZK455.6.1"/>
<dbReference type="PaxDb" id="6239-ZK455.6"/>
<dbReference type="EnsemblMetazoa" id="ZK455.6.1">
    <property type="protein sequence ID" value="ZK455.6.1"/>
    <property type="gene ID" value="WBGene00013976"/>
</dbReference>
<dbReference type="GeneID" id="191322"/>
<dbReference type="KEGG" id="cel:CELE_ZK455.6"/>
<dbReference type="AGR" id="WB:WBGene00013976"/>
<dbReference type="CTD" id="191322"/>
<dbReference type="WormBase" id="ZK455.6">
    <property type="protein sequence ID" value="CE43818"/>
    <property type="gene ID" value="WBGene00013976"/>
    <property type="gene designation" value="hizr-1"/>
</dbReference>
<dbReference type="eggNOG" id="KOG3575">
    <property type="taxonomic scope" value="Eukaryota"/>
</dbReference>
<dbReference type="HOGENOM" id="CLU_007368_1_1_1"/>
<dbReference type="InParanoid" id="G5ED47"/>
<dbReference type="OMA" id="EADVCCK"/>
<dbReference type="OrthoDB" id="5771769at2759"/>
<dbReference type="PhylomeDB" id="G5ED47"/>
<dbReference type="PRO" id="PR:G5ED47"/>
<dbReference type="Proteomes" id="UP000001940">
    <property type="component" value="Chromosome X"/>
</dbReference>
<dbReference type="Bgee" id="WBGene00013976">
    <property type="expression patterns" value="Expressed in adult organism and 2 other cell types or tissues"/>
</dbReference>
<dbReference type="GO" id="GO:0005737">
    <property type="term" value="C:cytoplasm"/>
    <property type="evidence" value="ECO:0000314"/>
    <property type="project" value="UniProtKB"/>
</dbReference>
<dbReference type="GO" id="GO:0005634">
    <property type="term" value="C:nucleus"/>
    <property type="evidence" value="ECO:0000314"/>
    <property type="project" value="UniProtKB"/>
</dbReference>
<dbReference type="GO" id="GO:0000987">
    <property type="term" value="F:cis-regulatory region sequence-specific DNA binding"/>
    <property type="evidence" value="ECO:0000315"/>
    <property type="project" value="UniProtKB"/>
</dbReference>
<dbReference type="GO" id="GO:0003700">
    <property type="term" value="F:DNA-binding transcription factor activity"/>
    <property type="evidence" value="ECO:0000315"/>
    <property type="project" value="UniProtKB"/>
</dbReference>
<dbReference type="GO" id="GO:0000978">
    <property type="term" value="F:RNA polymerase II cis-regulatory region sequence-specific DNA binding"/>
    <property type="evidence" value="ECO:0007669"/>
    <property type="project" value="InterPro"/>
</dbReference>
<dbReference type="GO" id="GO:0008270">
    <property type="term" value="F:zinc ion binding"/>
    <property type="evidence" value="ECO:0000314"/>
    <property type="project" value="UniProtKB"/>
</dbReference>
<dbReference type="GO" id="GO:0006882">
    <property type="term" value="P:intracellular zinc ion homeostasis"/>
    <property type="evidence" value="ECO:0000315"/>
    <property type="project" value="UniProtKB"/>
</dbReference>
<dbReference type="GO" id="GO:0045944">
    <property type="term" value="P:positive regulation of transcription by RNA polymerase II"/>
    <property type="evidence" value="ECO:0000315"/>
    <property type="project" value="UniProtKB"/>
</dbReference>
<dbReference type="CDD" id="cd06960">
    <property type="entry name" value="NR_DBD_HNF4A"/>
    <property type="match status" value="1"/>
</dbReference>
<dbReference type="FunFam" id="3.30.50.10:FF:000073">
    <property type="entry name" value="Nuclear hormone receptor family member nhr-121"/>
    <property type="match status" value="1"/>
</dbReference>
<dbReference type="FunFam" id="1.10.565.10:FF:000068">
    <property type="entry name" value="Nuclear hormone receptor family member nhr-86"/>
    <property type="match status" value="1"/>
</dbReference>
<dbReference type="Gene3D" id="3.30.50.10">
    <property type="entry name" value="Erythroid Transcription Factor GATA-1, subunit A"/>
    <property type="match status" value="1"/>
</dbReference>
<dbReference type="Gene3D" id="1.10.565.10">
    <property type="entry name" value="Retinoid X Receptor"/>
    <property type="match status" value="1"/>
</dbReference>
<dbReference type="InterPro" id="IPR049636">
    <property type="entry name" value="HNF4-like_DBD"/>
</dbReference>
<dbReference type="InterPro" id="IPR035500">
    <property type="entry name" value="NHR-like_dom_sf"/>
</dbReference>
<dbReference type="InterPro" id="IPR000536">
    <property type="entry name" value="Nucl_hrmn_rcpt_lig-bd"/>
</dbReference>
<dbReference type="InterPro" id="IPR001628">
    <property type="entry name" value="Znf_hrmn_rcpt"/>
</dbReference>
<dbReference type="InterPro" id="IPR013088">
    <property type="entry name" value="Znf_NHR/GATA"/>
</dbReference>
<dbReference type="PANTHER" id="PTHR46011:SF6">
    <property type="entry name" value="HIGH ZINC ACTIVATED NUCLEAR RECEPTOR PROTEIN"/>
    <property type="match status" value="1"/>
</dbReference>
<dbReference type="PANTHER" id="PTHR46011">
    <property type="entry name" value="NUCLEAR HORMONE RECEPTOR FAMILY MEMBER NHR-86-RELATED"/>
    <property type="match status" value="1"/>
</dbReference>
<dbReference type="Pfam" id="PF00104">
    <property type="entry name" value="Hormone_recep"/>
    <property type="match status" value="1"/>
</dbReference>
<dbReference type="Pfam" id="PF00105">
    <property type="entry name" value="zf-C4"/>
    <property type="match status" value="1"/>
</dbReference>
<dbReference type="PRINTS" id="PR00047">
    <property type="entry name" value="STROIDFINGER"/>
</dbReference>
<dbReference type="SMART" id="SM00430">
    <property type="entry name" value="HOLI"/>
    <property type="match status" value="1"/>
</dbReference>
<dbReference type="SMART" id="SM00399">
    <property type="entry name" value="ZnF_C4"/>
    <property type="match status" value="1"/>
</dbReference>
<dbReference type="SUPFAM" id="SSF57716">
    <property type="entry name" value="Glucocorticoid receptor-like (DNA-binding domain)"/>
    <property type="match status" value="1"/>
</dbReference>
<dbReference type="SUPFAM" id="SSF48508">
    <property type="entry name" value="Nuclear receptor ligand-binding domain"/>
    <property type="match status" value="1"/>
</dbReference>
<dbReference type="PROSITE" id="PS51843">
    <property type="entry name" value="NR_LBD"/>
    <property type="match status" value="1"/>
</dbReference>
<dbReference type="PROSITE" id="PS00031">
    <property type="entry name" value="NUCLEAR_REC_DBD_1"/>
    <property type="match status" value="1"/>
</dbReference>
<dbReference type="PROSITE" id="PS51030">
    <property type="entry name" value="NUCLEAR_REC_DBD_2"/>
    <property type="match status" value="1"/>
</dbReference>
<reference evidence="8" key="1">
    <citation type="journal article" date="1998" name="Science">
        <title>Genome sequence of the nematode C. elegans: a platform for investigating biology.</title>
        <authorList>
            <consortium name="The C. elegans sequencing consortium"/>
        </authorList>
    </citation>
    <scope>NUCLEOTIDE SEQUENCE [LARGE SCALE GENOMIC DNA]</scope>
    <source>
        <strain evidence="8">Bristol N2</strain>
    </source>
</reference>
<reference evidence="6" key="2">
    <citation type="journal article" date="2017" name="PLoS Biol.">
        <title>The nuclear receptor HIZR-1 uses zinc as a ligand to mediate homeostasis in response to high zinc.</title>
        <authorList>
            <person name="Warnhoff K."/>
            <person name="Roh H.C."/>
            <person name="Kocsisova Z."/>
            <person name="Tan C.H."/>
            <person name="Morrison A."/>
            <person name="Croswell D."/>
            <person name="Schneider D.L."/>
            <person name="Kornfeld K."/>
        </authorList>
    </citation>
    <scope>FUNCTION</scope>
    <scope>SUBCELLULAR LOCATION</scope>
    <scope>TISSUE SPECIFICITY</scope>
    <scope>INDUCTION BY ZINC</scope>
    <scope>DISRUPTION PHENOTYPE</scope>
    <scope>MUTAGENESIS OF GLY-23; SER-30; ARG-63 AND ASP-270</scope>
</reference>
<accession>G5ED47</accession>
<proteinExistence type="evidence at protein level"/>
<organism evidence="8">
    <name type="scientific">Caenorhabditis elegans</name>
    <dbReference type="NCBI Taxonomy" id="6239"/>
    <lineage>
        <taxon>Eukaryota</taxon>
        <taxon>Metazoa</taxon>
        <taxon>Ecdysozoa</taxon>
        <taxon>Nematoda</taxon>
        <taxon>Chromadorea</taxon>
        <taxon>Rhabditida</taxon>
        <taxon>Rhabditina</taxon>
        <taxon>Rhabditomorpha</taxon>
        <taxon>Rhabditoidea</taxon>
        <taxon>Rhabditidae</taxon>
        <taxon>Peloderinae</taxon>
        <taxon>Caenorhabditis</taxon>
    </lineage>
</organism>
<feature type="chain" id="PRO_0000440165" description="High zinc activated nuclear receptor protein" evidence="6">
    <location>
        <begin position="1"/>
        <end position="413"/>
    </location>
</feature>
<feature type="domain" description="NR LBD" evidence="2">
    <location>
        <begin position="135"/>
        <end position="396"/>
    </location>
</feature>
<feature type="DNA-binding region" description="Nuclear receptor" evidence="1">
    <location>
        <begin position="11"/>
        <end position="86"/>
    </location>
</feature>
<feature type="zinc finger region" description="NR C4-type" evidence="1">
    <location>
        <begin position="14"/>
        <end position="34"/>
    </location>
</feature>
<feature type="zinc finger region" description="NR C4-type" evidence="1">
    <location>
        <begin position="50"/>
        <end position="69"/>
    </location>
</feature>
<feature type="region of interest" description="Required for zinc-binding" evidence="4">
    <location>
        <begin position="101"/>
        <end position="412"/>
    </location>
</feature>
<feature type="site" description="Required for DNA binding" evidence="4">
    <location>
        <position position="23"/>
    </location>
</feature>
<feature type="site" description="Required for DNA binding" evidence="4">
    <location>
        <position position="30"/>
    </location>
</feature>
<feature type="site" description="Required for DNA binding" evidence="4">
    <location>
        <position position="63"/>
    </location>
</feature>
<feature type="mutagenesis site" description="Does not bind DNA enhancer elements." evidence="4">
    <original>G</original>
    <variation>E</variation>
    <location>
        <position position="23"/>
    </location>
</feature>
<feature type="mutagenesis site" description="Does not bind DNA enhancer elements." evidence="4">
    <original>S</original>
    <variation>L</variation>
    <location>
        <position position="30"/>
    </location>
</feature>
<feature type="mutagenesis site" description="Does not bind DNA enhancer elements." evidence="4">
    <original>R</original>
    <variation>C</variation>
    <location>
        <position position="63"/>
    </location>
</feature>
<feature type="mutagenesis site" description="In am285; gain of function. The mutant protein accumulates in nucleus and increases transcription of zinc-activated genes in the absence of excess dietary zinc." evidence="4">
    <original>D</original>
    <variation>N</variation>
    <location>
        <position position="270"/>
    </location>
</feature>
<name>HIZR1_CAEEL</name>